<feature type="chain" id="PRO_0000376259" description="NADH-quinone oxidoreductase subunit B">
    <location>
        <begin position="1"/>
        <end position="186"/>
    </location>
</feature>
<feature type="binding site" evidence="1">
    <location>
        <position position="44"/>
    </location>
    <ligand>
        <name>[4Fe-4S] cluster</name>
        <dbReference type="ChEBI" id="CHEBI:49883"/>
    </ligand>
</feature>
<feature type="binding site" evidence="1">
    <location>
        <position position="45"/>
    </location>
    <ligand>
        <name>[4Fe-4S] cluster</name>
        <dbReference type="ChEBI" id="CHEBI:49883"/>
    </ligand>
</feature>
<feature type="binding site" evidence="1">
    <location>
        <position position="110"/>
    </location>
    <ligand>
        <name>[4Fe-4S] cluster</name>
        <dbReference type="ChEBI" id="CHEBI:49883"/>
    </ligand>
</feature>
<feature type="binding site" evidence="1">
    <location>
        <position position="139"/>
    </location>
    <ligand>
        <name>[4Fe-4S] cluster</name>
        <dbReference type="ChEBI" id="CHEBI:49883"/>
    </ligand>
</feature>
<evidence type="ECO:0000255" key="1">
    <source>
        <dbReference type="HAMAP-Rule" id="MF_01356"/>
    </source>
</evidence>
<organism>
    <name type="scientific">Leptospira biflexa serovar Patoc (strain Patoc 1 / Ames)</name>
    <dbReference type="NCBI Taxonomy" id="355278"/>
    <lineage>
        <taxon>Bacteria</taxon>
        <taxon>Pseudomonadati</taxon>
        <taxon>Spirochaetota</taxon>
        <taxon>Spirochaetia</taxon>
        <taxon>Leptospirales</taxon>
        <taxon>Leptospiraceae</taxon>
        <taxon>Leptospira</taxon>
    </lineage>
</organism>
<name>NUOB_LEPBA</name>
<dbReference type="EC" id="7.1.1.-" evidence="1"/>
<dbReference type="EMBL" id="CP000777">
    <property type="protein sequence ID" value="ABZ93765.1"/>
    <property type="molecule type" value="Genomic_DNA"/>
</dbReference>
<dbReference type="RefSeq" id="WP_012388288.1">
    <property type="nucleotide sequence ID" value="NC_010842.1"/>
</dbReference>
<dbReference type="SMR" id="B0SFT5"/>
<dbReference type="KEGG" id="lbf:LBF_1243"/>
<dbReference type="HOGENOM" id="CLU_055737_7_3_12"/>
<dbReference type="GO" id="GO:0005886">
    <property type="term" value="C:plasma membrane"/>
    <property type="evidence" value="ECO:0007669"/>
    <property type="project" value="UniProtKB-SubCell"/>
</dbReference>
<dbReference type="GO" id="GO:0045271">
    <property type="term" value="C:respiratory chain complex I"/>
    <property type="evidence" value="ECO:0007669"/>
    <property type="project" value="TreeGrafter"/>
</dbReference>
<dbReference type="GO" id="GO:0051539">
    <property type="term" value="F:4 iron, 4 sulfur cluster binding"/>
    <property type="evidence" value="ECO:0007669"/>
    <property type="project" value="UniProtKB-KW"/>
</dbReference>
<dbReference type="GO" id="GO:0005506">
    <property type="term" value="F:iron ion binding"/>
    <property type="evidence" value="ECO:0007669"/>
    <property type="project" value="UniProtKB-UniRule"/>
</dbReference>
<dbReference type="GO" id="GO:0008137">
    <property type="term" value="F:NADH dehydrogenase (ubiquinone) activity"/>
    <property type="evidence" value="ECO:0007669"/>
    <property type="project" value="InterPro"/>
</dbReference>
<dbReference type="GO" id="GO:0050136">
    <property type="term" value="F:NADH:ubiquinone reductase (non-electrogenic) activity"/>
    <property type="evidence" value="ECO:0007669"/>
    <property type="project" value="UniProtKB-UniRule"/>
</dbReference>
<dbReference type="GO" id="GO:0048038">
    <property type="term" value="F:quinone binding"/>
    <property type="evidence" value="ECO:0007669"/>
    <property type="project" value="UniProtKB-KW"/>
</dbReference>
<dbReference type="GO" id="GO:0009060">
    <property type="term" value="P:aerobic respiration"/>
    <property type="evidence" value="ECO:0007669"/>
    <property type="project" value="TreeGrafter"/>
</dbReference>
<dbReference type="GO" id="GO:0015990">
    <property type="term" value="P:electron transport coupled proton transport"/>
    <property type="evidence" value="ECO:0007669"/>
    <property type="project" value="TreeGrafter"/>
</dbReference>
<dbReference type="FunFam" id="3.40.50.12280:FF:000002">
    <property type="entry name" value="NADH-quinone oxidoreductase subunit B"/>
    <property type="match status" value="1"/>
</dbReference>
<dbReference type="Gene3D" id="3.40.50.12280">
    <property type="match status" value="1"/>
</dbReference>
<dbReference type="HAMAP" id="MF_01356">
    <property type="entry name" value="NDH1_NuoB"/>
    <property type="match status" value="1"/>
</dbReference>
<dbReference type="InterPro" id="IPR006137">
    <property type="entry name" value="NADH_UbQ_OxRdtase-like_20kDa"/>
</dbReference>
<dbReference type="InterPro" id="IPR006138">
    <property type="entry name" value="NADH_UQ_OxRdtase_20Kd_su"/>
</dbReference>
<dbReference type="NCBIfam" id="TIGR01957">
    <property type="entry name" value="nuoB_fam"/>
    <property type="match status" value="1"/>
</dbReference>
<dbReference type="NCBIfam" id="NF005012">
    <property type="entry name" value="PRK06411.1"/>
    <property type="match status" value="1"/>
</dbReference>
<dbReference type="NCBIfam" id="NF011389">
    <property type="entry name" value="PRK14814.1"/>
    <property type="match status" value="1"/>
</dbReference>
<dbReference type="PANTHER" id="PTHR11995">
    <property type="entry name" value="NADH DEHYDROGENASE"/>
    <property type="match status" value="1"/>
</dbReference>
<dbReference type="PANTHER" id="PTHR11995:SF14">
    <property type="entry name" value="NADH DEHYDROGENASE [UBIQUINONE] IRON-SULFUR PROTEIN 7, MITOCHONDRIAL"/>
    <property type="match status" value="1"/>
</dbReference>
<dbReference type="Pfam" id="PF01058">
    <property type="entry name" value="Oxidored_q6"/>
    <property type="match status" value="1"/>
</dbReference>
<dbReference type="SUPFAM" id="SSF56770">
    <property type="entry name" value="HydA/Nqo6-like"/>
    <property type="match status" value="1"/>
</dbReference>
<dbReference type="PROSITE" id="PS01150">
    <property type="entry name" value="COMPLEX1_20K"/>
    <property type="match status" value="1"/>
</dbReference>
<keyword id="KW-0004">4Fe-4S</keyword>
<keyword id="KW-0997">Cell inner membrane</keyword>
<keyword id="KW-1003">Cell membrane</keyword>
<keyword id="KW-0408">Iron</keyword>
<keyword id="KW-0411">Iron-sulfur</keyword>
<keyword id="KW-0472">Membrane</keyword>
<keyword id="KW-0479">Metal-binding</keyword>
<keyword id="KW-0520">NAD</keyword>
<keyword id="KW-0874">Quinone</keyword>
<keyword id="KW-1278">Translocase</keyword>
<keyword id="KW-0813">Transport</keyword>
<keyword id="KW-0830">Ubiquinone</keyword>
<gene>
    <name evidence="1" type="primary">nuoB</name>
    <name type="ordered locus">LBF_1243</name>
</gene>
<proteinExistence type="inferred from homology"/>
<reference key="1">
    <citation type="journal article" date="2008" name="PLoS ONE">
        <title>Genome sequence of the saprophyte Leptospira biflexa provides insights into the evolution of Leptospira and the pathogenesis of leptospirosis.</title>
        <authorList>
            <person name="Picardeau M."/>
            <person name="Bulach D.M."/>
            <person name="Bouchier C."/>
            <person name="Zuerner R.L."/>
            <person name="Zidane N."/>
            <person name="Wilson P.J."/>
            <person name="Creno S."/>
            <person name="Kuczek E.S."/>
            <person name="Bommezzadri S."/>
            <person name="Davis J.C."/>
            <person name="McGrath A."/>
            <person name="Johnson M.J."/>
            <person name="Boursaux-Eude C."/>
            <person name="Seemann T."/>
            <person name="Rouy Z."/>
            <person name="Coppel R.L."/>
            <person name="Rood J.I."/>
            <person name="Lajus A."/>
            <person name="Davies J.K."/>
            <person name="Medigue C."/>
            <person name="Adler B."/>
        </authorList>
    </citation>
    <scope>NUCLEOTIDE SEQUENCE [LARGE SCALE GENOMIC DNA]</scope>
    <source>
        <strain>Patoc 1 / Ames</strain>
    </source>
</reference>
<accession>B0SFT5</accession>
<sequence>MGLTETLSKPGEMFGDMFQVATLDNVVQWGQSFSLWPYPFATACCGIEYMSTACADYDIARFGAERPSFSPRQADMILVLGTITYKMAPVLRQIYDQLAEPKFVISVGACASSGGMFHTYGVLQGVDRILPVDVYVPGCPPRPEAILDALVKLQKKVQSQGLEARRQEVMRKIEEINERNKPLVVA</sequence>
<protein>
    <recommendedName>
        <fullName evidence="1">NADH-quinone oxidoreductase subunit B</fullName>
        <ecNumber evidence="1">7.1.1.-</ecNumber>
    </recommendedName>
    <alternativeName>
        <fullName evidence="1">NADH dehydrogenase I subunit B</fullName>
    </alternativeName>
    <alternativeName>
        <fullName evidence="1">NDH-1 subunit B</fullName>
    </alternativeName>
</protein>
<comment type="function">
    <text evidence="1">NDH-1 shuttles electrons from NADH, via FMN and iron-sulfur (Fe-S) centers, to quinones in the respiratory chain. The immediate electron acceptor for the enzyme in this species is believed to be ubiquinone. Couples the redox reaction to proton translocation (for every two electrons transferred, four hydrogen ions are translocated across the cytoplasmic membrane), and thus conserves the redox energy in a proton gradient.</text>
</comment>
<comment type="catalytic activity">
    <reaction evidence="1">
        <text>a quinone + NADH + 5 H(+)(in) = a quinol + NAD(+) + 4 H(+)(out)</text>
        <dbReference type="Rhea" id="RHEA:57888"/>
        <dbReference type="ChEBI" id="CHEBI:15378"/>
        <dbReference type="ChEBI" id="CHEBI:24646"/>
        <dbReference type="ChEBI" id="CHEBI:57540"/>
        <dbReference type="ChEBI" id="CHEBI:57945"/>
        <dbReference type="ChEBI" id="CHEBI:132124"/>
    </reaction>
</comment>
<comment type="cofactor">
    <cofactor evidence="1">
        <name>[4Fe-4S] cluster</name>
        <dbReference type="ChEBI" id="CHEBI:49883"/>
    </cofactor>
    <text evidence="1">Binds 1 [4Fe-4S] cluster.</text>
</comment>
<comment type="subunit">
    <text evidence="1">NDH-1 is composed of 14 different subunits. Subunits NuoB, C, D, E, F, and G constitute the peripheral sector of the complex.</text>
</comment>
<comment type="subcellular location">
    <subcellularLocation>
        <location evidence="1">Cell inner membrane</location>
        <topology evidence="1">Peripheral membrane protein</topology>
        <orientation evidence="1">Cytoplasmic side</orientation>
    </subcellularLocation>
</comment>
<comment type="similarity">
    <text evidence="1">Belongs to the complex I 20 kDa subunit family.</text>
</comment>